<comment type="function">
    <text evidence="1">Receptor for chemokine SCYA25/TECK. Subsequently transduces a signal by increasing the intracellular calcium ions level (By similarity).</text>
</comment>
<comment type="subcellular location">
    <subcellularLocation>
        <location evidence="2">Cell membrane</location>
        <topology evidence="2">Multi-pass membrane protein</topology>
    </subcellularLocation>
</comment>
<comment type="similarity">
    <text evidence="4">Belongs to the G-protein coupled receptor 1 family.</text>
</comment>
<feature type="chain" id="PRO_0000249812" description="C-C chemokine receptor type 9">
    <location>
        <begin position="1"/>
        <end position="367"/>
    </location>
</feature>
<feature type="topological domain" description="Extracellular" evidence="2">
    <location>
        <begin position="1"/>
        <end position="46"/>
    </location>
</feature>
<feature type="transmembrane region" description="Helical; Name=1" evidence="2">
    <location>
        <begin position="47"/>
        <end position="72"/>
    </location>
</feature>
<feature type="topological domain" description="Cytoplasmic" evidence="2">
    <location>
        <begin position="73"/>
        <end position="83"/>
    </location>
</feature>
<feature type="transmembrane region" description="Helical; Name=2" evidence="2">
    <location>
        <begin position="84"/>
        <end position="107"/>
    </location>
</feature>
<feature type="topological domain" description="Extracellular" evidence="2">
    <location>
        <begin position="108"/>
        <end position="118"/>
    </location>
</feature>
<feature type="transmembrane region" description="Helical; Name=3" evidence="2">
    <location>
        <begin position="119"/>
        <end position="148"/>
    </location>
</feature>
<feature type="topological domain" description="Cytoplasmic" evidence="2">
    <location>
        <begin position="149"/>
        <end position="157"/>
    </location>
</feature>
<feature type="transmembrane region" description="Helical; Name=4" evidence="2">
    <location>
        <begin position="158"/>
        <end position="183"/>
    </location>
</feature>
<feature type="topological domain" description="Extracellular" evidence="2">
    <location>
        <begin position="184"/>
        <end position="206"/>
    </location>
</feature>
<feature type="transmembrane region" description="Helical; Name=5" evidence="2">
    <location>
        <begin position="207"/>
        <end position="241"/>
    </location>
</feature>
<feature type="topological domain" description="Cytoplasmic" evidence="2">
    <location>
        <begin position="242"/>
        <end position="246"/>
    </location>
</feature>
<feature type="transmembrane region" description="Helical; Name=6" evidence="2">
    <location>
        <begin position="247"/>
        <end position="281"/>
    </location>
</feature>
<feature type="topological domain" description="Extracellular" evidence="2">
    <location>
        <begin position="282"/>
        <end position="288"/>
    </location>
</feature>
<feature type="transmembrane region" description="Helical; Name=7" evidence="2">
    <location>
        <begin position="289"/>
        <end position="319"/>
    </location>
</feature>
<feature type="topological domain" description="Cytoplasmic" evidence="2">
    <location>
        <begin position="320"/>
        <end position="367"/>
    </location>
</feature>
<feature type="glycosylation site" description="N-linked (GlcNAc...) asparagine" evidence="3">
    <location>
        <position position="30"/>
    </location>
</feature>
<feature type="glycosylation site" description="N-linked (GlcNAc...) asparagine" evidence="3">
    <location>
        <position position="203"/>
    </location>
</feature>
<feature type="disulfide bond" evidence="2">
    <location>
        <begin position="36"/>
        <end position="287"/>
    </location>
</feature>
<feature type="disulfide bond" evidence="2 4">
    <location>
        <begin position="117"/>
        <end position="196"/>
    </location>
</feature>
<name>CCR9_SHEEP</name>
<reference key="1">
    <citation type="submission" date="2005-07" db="EMBL/GenBank/DDBJ databases">
        <authorList>
            <person name="Meurens F."/>
            <person name="Whale J."/>
            <person name="Brownlie R."/>
            <person name="Gerdts V."/>
        </authorList>
    </citation>
    <scope>NUCLEOTIDE SEQUENCE [MRNA]</scope>
    <source>
        <tissue>Peyer patch</tissue>
    </source>
</reference>
<accession>Q1WLP9</accession>
<keyword id="KW-1003">Cell membrane</keyword>
<keyword id="KW-1015">Disulfide bond</keyword>
<keyword id="KW-0297">G-protein coupled receptor</keyword>
<keyword id="KW-0325">Glycoprotein</keyword>
<keyword id="KW-0472">Membrane</keyword>
<keyword id="KW-0675">Receptor</keyword>
<keyword id="KW-1185">Reference proteome</keyword>
<keyword id="KW-0807">Transducer</keyword>
<keyword id="KW-0812">Transmembrane</keyword>
<keyword id="KW-1133">Transmembrane helix</keyword>
<organism>
    <name type="scientific">Ovis aries</name>
    <name type="common">Sheep</name>
    <dbReference type="NCBI Taxonomy" id="9940"/>
    <lineage>
        <taxon>Eukaryota</taxon>
        <taxon>Metazoa</taxon>
        <taxon>Chordata</taxon>
        <taxon>Craniata</taxon>
        <taxon>Vertebrata</taxon>
        <taxon>Euteleostomi</taxon>
        <taxon>Mammalia</taxon>
        <taxon>Eutheria</taxon>
        <taxon>Laurasiatheria</taxon>
        <taxon>Artiodactyla</taxon>
        <taxon>Ruminantia</taxon>
        <taxon>Pecora</taxon>
        <taxon>Bovidae</taxon>
        <taxon>Caprinae</taxon>
        <taxon>Ovis</taxon>
    </lineage>
</organism>
<gene>
    <name type="primary">CCR9</name>
</gene>
<evidence type="ECO:0000250" key="1"/>
<evidence type="ECO:0000250" key="2">
    <source>
        <dbReference type="UniProtKB" id="P51686"/>
    </source>
</evidence>
<evidence type="ECO:0000255" key="3"/>
<evidence type="ECO:0000255" key="4">
    <source>
        <dbReference type="PROSITE-ProRule" id="PRU00521"/>
    </source>
</evidence>
<protein>
    <recommendedName>
        <fullName>C-C chemokine receptor type 9</fullName>
        <shortName>C-C CKR-9</shortName>
        <shortName>CC-CKR-9</shortName>
        <shortName>CCR-9</shortName>
    </recommendedName>
    <cdAntigenName>CDw199</cdAntigenName>
</protein>
<dbReference type="EMBL" id="DQ131911">
    <property type="protein sequence ID" value="ABA00206.1"/>
    <property type="molecule type" value="mRNA"/>
</dbReference>
<dbReference type="RefSeq" id="NP_001035376.1">
    <property type="nucleotide sequence ID" value="NM_001040286.1"/>
</dbReference>
<dbReference type="RefSeq" id="XP_011954646.1">
    <property type="nucleotide sequence ID" value="XM_012099256.2"/>
</dbReference>
<dbReference type="RefSeq" id="XP_042091670.1">
    <property type="nucleotide sequence ID" value="XM_042235736.2"/>
</dbReference>
<dbReference type="RefSeq" id="XP_042091672.1">
    <property type="nucleotide sequence ID" value="XM_042235738.2"/>
</dbReference>
<dbReference type="RefSeq" id="XP_042091673.1">
    <property type="nucleotide sequence ID" value="XM_042235739.2"/>
</dbReference>
<dbReference type="RefSeq" id="XP_060258017.1">
    <property type="nucleotide sequence ID" value="XM_060402034.1"/>
</dbReference>
<dbReference type="SMR" id="Q1WLP9"/>
<dbReference type="STRING" id="9940.ENSOARP00000010208"/>
<dbReference type="GlyCosmos" id="Q1WLP9">
    <property type="glycosylation" value="2 sites, No reported glycans"/>
</dbReference>
<dbReference type="PaxDb" id="9940-ENSOARP00000010208"/>
<dbReference type="Ensembl" id="ENSOART00225026926">
    <property type="protein sequence ID" value="ENSOARP00225012781"/>
    <property type="gene ID" value="ENSOARG00225016566"/>
</dbReference>
<dbReference type="GeneID" id="678667"/>
<dbReference type="KEGG" id="oas:678667"/>
<dbReference type="CTD" id="10803"/>
<dbReference type="eggNOG" id="KOG3656">
    <property type="taxonomic scope" value="Eukaryota"/>
</dbReference>
<dbReference type="HOGENOM" id="CLU_009579_8_3_1"/>
<dbReference type="OMA" id="FPYNCVL"/>
<dbReference type="OrthoDB" id="9942559at2759"/>
<dbReference type="Proteomes" id="UP000002356">
    <property type="component" value="Chromosome 19"/>
</dbReference>
<dbReference type="Bgee" id="ENSOARG00000009514">
    <property type="expression patterns" value="Expressed in major salivary gland and 37 other cell types or tissues"/>
</dbReference>
<dbReference type="GO" id="GO:0009897">
    <property type="term" value="C:external side of plasma membrane"/>
    <property type="evidence" value="ECO:0007669"/>
    <property type="project" value="TreeGrafter"/>
</dbReference>
<dbReference type="GO" id="GO:0019957">
    <property type="term" value="F:C-C chemokine binding"/>
    <property type="evidence" value="ECO:0007669"/>
    <property type="project" value="TreeGrafter"/>
</dbReference>
<dbReference type="GO" id="GO:0016493">
    <property type="term" value="F:C-C chemokine receptor activity"/>
    <property type="evidence" value="ECO:0007669"/>
    <property type="project" value="Ensembl"/>
</dbReference>
<dbReference type="GO" id="GO:0019722">
    <property type="term" value="P:calcium-mediated signaling"/>
    <property type="evidence" value="ECO:0007669"/>
    <property type="project" value="TreeGrafter"/>
</dbReference>
<dbReference type="GO" id="GO:0002305">
    <property type="term" value="P:CD8-positive, gamma-delta intraepithelial T cell differentiation"/>
    <property type="evidence" value="ECO:0007669"/>
    <property type="project" value="Ensembl"/>
</dbReference>
<dbReference type="GO" id="GO:0060326">
    <property type="term" value="P:cell chemotaxis"/>
    <property type="evidence" value="ECO:0007669"/>
    <property type="project" value="TreeGrafter"/>
</dbReference>
<dbReference type="GO" id="GO:0006955">
    <property type="term" value="P:immune response"/>
    <property type="evidence" value="ECO:0007669"/>
    <property type="project" value="InterPro"/>
</dbReference>
<dbReference type="GO" id="GO:0007204">
    <property type="term" value="P:positive regulation of cytosolic calcium ion concentration"/>
    <property type="evidence" value="ECO:0007669"/>
    <property type="project" value="TreeGrafter"/>
</dbReference>
<dbReference type="CDD" id="cd15174">
    <property type="entry name" value="7tmA_CCR9"/>
    <property type="match status" value="1"/>
</dbReference>
<dbReference type="FunFam" id="1.20.1070.10:FF:000035">
    <property type="entry name" value="C-C chemokine receptor type 6"/>
    <property type="match status" value="1"/>
</dbReference>
<dbReference type="Gene3D" id="1.20.1070.10">
    <property type="entry name" value="Rhodopsin 7-helix transmembrane proteins"/>
    <property type="match status" value="1"/>
</dbReference>
<dbReference type="InterPro" id="IPR050119">
    <property type="entry name" value="CCR1-9-like"/>
</dbReference>
<dbReference type="InterPro" id="IPR004069">
    <property type="entry name" value="Chemokine_CCR9"/>
</dbReference>
<dbReference type="InterPro" id="IPR000355">
    <property type="entry name" value="Chemokine_rcpt"/>
</dbReference>
<dbReference type="InterPro" id="IPR000276">
    <property type="entry name" value="GPCR_Rhodpsn"/>
</dbReference>
<dbReference type="InterPro" id="IPR017452">
    <property type="entry name" value="GPCR_Rhodpsn_7TM"/>
</dbReference>
<dbReference type="PANTHER" id="PTHR10489:SF664">
    <property type="entry name" value="C-C CHEMOKINE RECEPTOR TYPE 9"/>
    <property type="match status" value="1"/>
</dbReference>
<dbReference type="PANTHER" id="PTHR10489">
    <property type="entry name" value="CELL ADHESION MOLECULE"/>
    <property type="match status" value="1"/>
</dbReference>
<dbReference type="Pfam" id="PF00001">
    <property type="entry name" value="7tm_1"/>
    <property type="match status" value="1"/>
</dbReference>
<dbReference type="PRINTS" id="PR00657">
    <property type="entry name" value="CCCHEMOKINER"/>
</dbReference>
<dbReference type="PRINTS" id="PR01531">
    <property type="entry name" value="CHEMOKINER9"/>
</dbReference>
<dbReference type="PRINTS" id="PR00237">
    <property type="entry name" value="GPCRRHODOPSN"/>
</dbReference>
<dbReference type="SUPFAM" id="SSF81321">
    <property type="entry name" value="Family A G protein-coupled receptor-like"/>
    <property type="match status" value="1"/>
</dbReference>
<dbReference type="PROSITE" id="PS00237">
    <property type="entry name" value="G_PROTEIN_RECEP_F1_1"/>
    <property type="match status" value="1"/>
</dbReference>
<dbReference type="PROSITE" id="PS50262">
    <property type="entry name" value="G_PROTEIN_RECEP_F1_2"/>
    <property type="match status" value="1"/>
</dbReference>
<proteinExistence type="evidence at transcript level"/>
<sequence length="367" mass="41646">MVPTEATSLILNPSDDYGYDGTPPMEYDTNLTDYFCEKSHVRQFAGHFLPPLYWLVFIVGAVGNSLVILVYWYCTRVKTMTDMFLLNLAIADLLFLTTLPFWAIAAADQWKFQTFMCKVVNSMYKMNFYSCVLLIMCISVDRYIAIAQAMRAQMWRQKRLLYSKMVCFTIWVMAAALCLPELLYSQVKEEHGTAICTVVYSSNESTKLKSAVLTLKVTLGFFLPFVVMACCYAIIIHTLIRAKKSSKHKALKVTITVLTVFVLSQFPHNCVLLVQTIDAYATFISSCALSIKIDICFQVTQTVAFFHSCLNPVLYVFVGERFRRDLVKTLKNLGCISQAQWVSFTRREGSLKLSSMLLETTSGALSF</sequence>